<gene>
    <name evidence="1" type="primary">nfuA</name>
    <name type="ordered locus">Sbal223_4125</name>
</gene>
<reference key="1">
    <citation type="submission" date="2008-12" db="EMBL/GenBank/DDBJ databases">
        <title>Complete sequence of chromosome of Shewanella baltica OS223.</title>
        <authorList>
            <consortium name="US DOE Joint Genome Institute"/>
            <person name="Lucas S."/>
            <person name="Copeland A."/>
            <person name="Lapidus A."/>
            <person name="Glavina del Rio T."/>
            <person name="Dalin E."/>
            <person name="Tice H."/>
            <person name="Bruce D."/>
            <person name="Goodwin L."/>
            <person name="Pitluck S."/>
            <person name="Chertkov O."/>
            <person name="Meincke L."/>
            <person name="Brettin T."/>
            <person name="Detter J.C."/>
            <person name="Han C."/>
            <person name="Kuske C.R."/>
            <person name="Larimer F."/>
            <person name="Land M."/>
            <person name="Hauser L."/>
            <person name="Kyrpides N."/>
            <person name="Ovchinnikova G."/>
            <person name="Brettar I."/>
            <person name="Rodrigues J."/>
            <person name="Konstantinidis K."/>
            <person name="Tiedje J."/>
        </authorList>
    </citation>
    <scope>NUCLEOTIDE SEQUENCE [LARGE SCALE GENOMIC DNA]</scope>
    <source>
        <strain>OS223</strain>
    </source>
</reference>
<evidence type="ECO:0000255" key="1">
    <source>
        <dbReference type="HAMAP-Rule" id="MF_01637"/>
    </source>
</evidence>
<accession>B8ECN4</accession>
<comment type="function">
    <text evidence="1">Involved in iron-sulfur cluster biogenesis. Binds a 4Fe-4S cluster, can transfer this cluster to apoproteins, and thereby intervenes in the maturation of Fe/S proteins. Could also act as a scaffold/chaperone for damaged Fe/S proteins.</text>
</comment>
<comment type="cofactor">
    <cofactor evidence="1">
        <name>[4Fe-4S] cluster</name>
        <dbReference type="ChEBI" id="CHEBI:49883"/>
    </cofactor>
    <text evidence="1">Binds 1 [4Fe-4S] cluster per subunit. The cluster is presumably bound at the interface of two monomers.</text>
</comment>
<comment type="subunit">
    <text evidence="1">Homodimer.</text>
</comment>
<comment type="similarity">
    <text evidence="1">Belongs to the NfuA family.</text>
</comment>
<organism>
    <name type="scientific">Shewanella baltica (strain OS223)</name>
    <dbReference type="NCBI Taxonomy" id="407976"/>
    <lineage>
        <taxon>Bacteria</taxon>
        <taxon>Pseudomonadati</taxon>
        <taxon>Pseudomonadota</taxon>
        <taxon>Gammaproteobacteria</taxon>
        <taxon>Alteromonadales</taxon>
        <taxon>Shewanellaceae</taxon>
        <taxon>Shewanella</taxon>
    </lineage>
</organism>
<protein>
    <recommendedName>
        <fullName evidence="1">Fe/S biogenesis protein NfuA</fullName>
    </recommendedName>
</protein>
<dbReference type="EMBL" id="CP001252">
    <property type="protein sequence ID" value="ACK48596.1"/>
    <property type="molecule type" value="Genomic_DNA"/>
</dbReference>
<dbReference type="RefSeq" id="WP_006079591.1">
    <property type="nucleotide sequence ID" value="NC_011663.1"/>
</dbReference>
<dbReference type="SMR" id="B8ECN4"/>
<dbReference type="GeneID" id="11775045"/>
<dbReference type="KEGG" id="sbp:Sbal223_4125"/>
<dbReference type="HOGENOM" id="CLU_094569_0_0_6"/>
<dbReference type="Proteomes" id="UP000002507">
    <property type="component" value="Chromosome"/>
</dbReference>
<dbReference type="GO" id="GO:0051539">
    <property type="term" value="F:4 iron, 4 sulfur cluster binding"/>
    <property type="evidence" value="ECO:0007669"/>
    <property type="project" value="UniProtKB-UniRule"/>
</dbReference>
<dbReference type="GO" id="GO:0005506">
    <property type="term" value="F:iron ion binding"/>
    <property type="evidence" value="ECO:0007669"/>
    <property type="project" value="InterPro"/>
</dbReference>
<dbReference type="GO" id="GO:0016226">
    <property type="term" value="P:iron-sulfur cluster assembly"/>
    <property type="evidence" value="ECO:0007669"/>
    <property type="project" value="UniProtKB-UniRule"/>
</dbReference>
<dbReference type="GO" id="GO:0051604">
    <property type="term" value="P:protein maturation"/>
    <property type="evidence" value="ECO:0007669"/>
    <property type="project" value="UniProtKB-UniRule"/>
</dbReference>
<dbReference type="Gene3D" id="3.30.300.130">
    <property type="entry name" value="Fe-S cluster assembly (FSCA)"/>
    <property type="match status" value="1"/>
</dbReference>
<dbReference type="Gene3D" id="2.60.300.12">
    <property type="entry name" value="HesB-like domain"/>
    <property type="match status" value="1"/>
</dbReference>
<dbReference type="HAMAP" id="MF_01637">
    <property type="entry name" value="Fe_S_biogen_NfuA"/>
    <property type="match status" value="1"/>
</dbReference>
<dbReference type="InterPro" id="IPR017726">
    <property type="entry name" value="Fe/S_biogenesis_protein_NfuA"/>
</dbReference>
<dbReference type="InterPro" id="IPR000361">
    <property type="entry name" value="FeS_biogenesis"/>
</dbReference>
<dbReference type="InterPro" id="IPR034904">
    <property type="entry name" value="FSCA_dom_sf"/>
</dbReference>
<dbReference type="InterPro" id="IPR035903">
    <property type="entry name" value="HesB-like_dom_sf"/>
</dbReference>
<dbReference type="InterPro" id="IPR001075">
    <property type="entry name" value="NIF_FeS_clus_asmbl_NifU_C"/>
</dbReference>
<dbReference type="NCBIfam" id="NF008392">
    <property type="entry name" value="PRK11190.1"/>
    <property type="match status" value="1"/>
</dbReference>
<dbReference type="NCBIfam" id="TIGR03341">
    <property type="entry name" value="YhgI_GntY"/>
    <property type="match status" value="1"/>
</dbReference>
<dbReference type="PANTHER" id="PTHR11178:SF51">
    <property type="entry name" value="FE_S BIOGENESIS PROTEIN NFUA"/>
    <property type="match status" value="1"/>
</dbReference>
<dbReference type="PANTHER" id="PTHR11178">
    <property type="entry name" value="IRON-SULFUR CLUSTER SCAFFOLD PROTEIN NFU-RELATED"/>
    <property type="match status" value="1"/>
</dbReference>
<dbReference type="Pfam" id="PF01521">
    <property type="entry name" value="Fe-S_biosyn"/>
    <property type="match status" value="1"/>
</dbReference>
<dbReference type="Pfam" id="PF01106">
    <property type="entry name" value="NifU"/>
    <property type="match status" value="1"/>
</dbReference>
<dbReference type="SUPFAM" id="SSF117916">
    <property type="entry name" value="Fe-S cluster assembly (FSCA) domain-like"/>
    <property type="match status" value="1"/>
</dbReference>
<dbReference type="SUPFAM" id="SSF89360">
    <property type="entry name" value="HesB-like domain"/>
    <property type="match status" value="1"/>
</dbReference>
<feature type="chain" id="PRO_1000186779" description="Fe/S biogenesis protein NfuA">
    <location>
        <begin position="1"/>
        <end position="192"/>
    </location>
</feature>
<feature type="binding site" evidence="1">
    <location>
        <position position="149"/>
    </location>
    <ligand>
        <name>[4Fe-4S] cluster</name>
        <dbReference type="ChEBI" id="CHEBI:49883"/>
    </ligand>
</feature>
<feature type="binding site" evidence="1">
    <location>
        <position position="152"/>
    </location>
    <ligand>
        <name>[4Fe-4S] cluster</name>
        <dbReference type="ChEBI" id="CHEBI:49883"/>
    </ligand>
</feature>
<sequence>MITISDAAQAHFVKLLADQPEGTHIRVFVISPGTSQAECGVSYCPPDAVESDDIEIEFTGFNAMVDEKSAPFLEDATIDFVTDQLGSQLTLKAPNAKMRKVSGDAPLVERIEYVIQSEINPQLAGHGGNIMLVEITKEGVAVLQFGGGCNGCSQVDITLKDGIEKQLLDMFPGELTGVRDVTDHQHGEHSYA</sequence>
<name>NFUA_SHEB2</name>
<keyword id="KW-0004">4Fe-4S</keyword>
<keyword id="KW-0408">Iron</keyword>
<keyword id="KW-0411">Iron-sulfur</keyword>
<keyword id="KW-0479">Metal-binding</keyword>
<proteinExistence type="inferred from homology"/>